<dbReference type="EMBL" id="CP001138">
    <property type="protein sequence ID" value="ACH52365.1"/>
    <property type="molecule type" value="Genomic_DNA"/>
</dbReference>
<dbReference type="RefSeq" id="WP_000219714.1">
    <property type="nucleotide sequence ID" value="NC_011149.1"/>
</dbReference>
<dbReference type="SMR" id="B5F867"/>
<dbReference type="KEGG" id="sea:SeAg_B1891"/>
<dbReference type="HOGENOM" id="CLU_049702_0_0_6"/>
<dbReference type="Proteomes" id="UP000008819">
    <property type="component" value="Chromosome"/>
</dbReference>
<dbReference type="HAMAP" id="MF_01232">
    <property type="entry name" value="UPF0229"/>
    <property type="match status" value="1"/>
</dbReference>
<dbReference type="InterPro" id="IPR006698">
    <property type="entry name" value="UPF0229"/>
</dbReference>
<dbReference type="NCBIfam" id="NF003707">
    <property type="entry name" value="PRK05325.1-2"/>
    <property type="match status" value="1"/>
</dbReference>
<dbReference type="NCBIfam" id="NF003708">
    <property type="entry name" value="PRK05325.1-3"/>
    <property type="match status" value="1"/>
</dbReference>
<dbReference type="PANTHER" id="PTHR30510">
    <property type="entry name" value="UPF0229 PROTEIN YEAH"/>
    <property type="match status" value="1"/>
</dbReference>
<dbReference type="PANTHER" id="PTHR30510:SF2">
    <property type="entry name" value="UPF0229 PROTEIN YEAH"/>
    <property type="match status" value="1"/>
</dbReference>
<dbReference type="Pfam" id="PF04285">
    <property type="entry name" value="DUF444"/>
    <property type="match status" value="1"/>
</dbReference>
<accession>B5F867</accession>
<gene>
    <name evidence="1" type="primary">yeaH</name>
    <name type="ordered locus">SeAg_B1891</name>
</gene>
<comment type="similarity">
    <text evidence="1">Belongs to the UPF0229 family.</text>
</comment>
<protein>
    <recommendedName>
        <fullName evidence="1">UPF0229 protein YeaH</fullName>
    </recommendedName>
</protein>
<evidence type="ECO:0000255" key="1">
    <source>
        <dbReference type="HAMAP-Rule" id="MF_01232"/>
    </source>
</evidence>
<evidence type="ECO:0000256" key="2">
    <source>
        <dbReference type="SAM" id="MobiDB-lite"/>
    </source>
</evidence>
<feature type="chain" id="PRO_1000139652" description="UPF0229 protein YeaH">
    <location>
        <begin position="1"/>
        <end position="428"/>
    </location>
</feature>
<feature type="region of interest" description="Disordered" evidence="2">
    <location>
        <begin position="78"/>
        <end position="111"/>
    </location>
</feature>
<feature type="compositionally biased region" description="Basic and acidic residues" evidence="2">
    <location>
        <begin position="78"/>
        <end position="90"/>
    </location>
</feature>
<feature type="compositionally biased region" description="Gly residues" evidence="2">
    <location>
        <begin position="92"/>
        <end position="103"/>
    </location>
</feature>
<proteinExistence type="inferred from homology"/>
<reference key="1">
    <citation type="journal article" date="2011" name="J. Bacteriol.">
        <title>Comparative genomics of 28 Salmonella enterica isolates: evidence for CRISPR-mediated adaptive sublineage evolution.</title>
        <authorList>
            <person name="Fricke W.F."/>
            <person name="Mammel M.K."/>
            <person name="McDermott P.F."/>
            <person name="Tartera C."/>
            <person name="White D.G."/>
            <person name="Leclerc J.E."/>
            <person name="Ravel J."/>
            <person name="Cebula T.A."/>
        </authorList>
    </citation>
    <scope>NUCLEOTIDE SEQUENCE [LARGE SCALE GENOMIC DNA]</scope>
    <source>
        <strain>SL483</strain>
    </source>
</reference>
<sequence length="428" mass="49515">MTWFIDRRLNGKNKSTVNRQRFLRRYKAQIKQSISEAINKRSVTDVDSGESVSIPTDDISEPMFHQGRGGLRHRVHPGNDHFIQNDRIERPQGGGGGGSGSGQGQASQDGEGQDEFVFQISKDEYLDLLFEDLALPNLKKNQHRQLNEYKTHRAGFTSNGVPANISVVRSLQNSLARRTAMTAGKRRELHALETELETISHSEPAQLLEEERLRREIAELRAKIERVPFIDTFDLRYKNYEKRPEPSSQAVMFCLMDVSGSMDQATKDMAKRFYILLYLFLSRTYKNVEVVYIRHHTQAKEVDEHEFFYSQETGGTIVSSALKLMDEVVKERYDPGQWNIYAAQASDGDNWADDSPLCHEILAKKLLPVVRYYSYIEITRRAHQTLWREYEHLQATFDNFAMQHIRDQEDIYPVFRELFQKQSANQSA</sequence>
<name>YEAH_SALA4</name>
<organism>
    <name type="scientific">Salmonella agona (strain SL483)</name>
    <dbReference type="NCBI Taxonomy" id="454166"/>
    <lineage>
        <taxon>Bacteria</taxon>
        <taxon>Pseudomonadati</taxon>
        <taxon>Pseudomonadota</taxon>
        <taxon>Gammaproteobacteria</taxon>
        <taxon>Enterobacterales</taxon>
        <taxon>Enterobacteriaceae</taxon>
        <taxon>Salmonella</taxon>
    </lineage>
</organism>